<evidence type="ECO:0000250" key="1"/>
<evidence type="ECO:0000255" key="2"/>
<evidence type="ECO:0000305" key="3"/>
<gene>
    <name type="primary">Tmem14c</name>
    <name type="synonym">Cdtw1</name>
</gene>
<feature type="chain" id="PRO_0000221175" description="Transmembrane protein 14C">
    <location>
        <begin position="1"/>
        <end position="115"/>
    </location>
</feature>
<feature type="transmembrane region" description="Helical" evidence="2">
    <location>
        <begin position="8"/>
        <end position="28"/>
    </location>
</feature>
<feature type="transmembrane region" description="Helical" evidence="2">
    <location>
        <begin position="33"/>
        <end position="53"/>
    </location>
</feature>
<feature type="transmembrane region" description="Helical" evidence="2">
    <location>
        <begin position="63"/>
        <end position="83"/>
    </location>
</feature>
<feature type="transmembrane region" description="Helical" evidence="2">
    <location>
        <begin position="88"/>
        <end position="108"/>
    </location>
</feature>
<name>TM14C_RAT</name>
<protein>
    <recommendedName>
        <fullName>Transmembrane protein 14C</fullName>
    </recommendedName>
    <alternativeName>
        <fullName>p11</fullName>
    </alternativeName>
</protein>
<reference key="1">
    <citation type="submission" date="1998-08" db="EMBL/GenBank/DDBJ databases">
        <title>Isolation of a novel gene up-regulated by stroke.</title>
        <authorList>
            <person name="Chopp M."/>
            <person name="Dou D."/>
            <person name="Tsang W."/>
            <person name="Wang L."/>
        </authorList>
    </citation>
    <scope>NUCLEOTIDE SEQUENCE [MRNA]</scope>
    <source>
        <strain>Wistar</strain>
    </source>
</reference>
<proteinExistence type="inferred from homology"/>
<dbReference type="EMBL" id="AF083396">
    <property type="protein sequence ID" value="AAK84687.1"/>
    <property type="molecule type" value="mRNA"/>
</dbReference>
<dbReference type="RefSeq" id="NP_599222.2">
    <property type="nucleotide sequence ID" value="NM_134395.2"/>
</dbReference>
<dbReference type="FunCoup" id="Q924P2">
    <property type="interactions" value="1969"/>
</dbReference>
<dbReference type="STRING" id="10116.ENSRNOP00000020737"/>
<dbReference type="PhosphoSitePlus" id="Q924P2"/>
<dbReference type="PaxDb" id="10116-ENSRNOP00000020737"/>
<dbReference type="GeneID" id="171432"/>
<dbReference type="KEGG" id="rno:171432"/>
<dbReference type="UCSC" id="RGD:621692">
    <property type="organism name" value="rat"/>
</dbReference>
<dbReference type="AGR" id="RGD:621692"/>
<dbReference type="CTD" id="51522"/>
<dbReference type="RGD" id="621692">
    <property type="gene designation" value="Tmem14c"/>
</dbReference>
<dbReference type="eggNOG" id="KOG4267">
    <property type="taxonomic scope" value="Eukaryota"/>
</dbReference>
<dbReference type="InParanoid" id="Q924P2"/>
<dbReference type="OrthoDB" id="5620at2759"/>
<dbReference type="PhylomeDB" id="Q924P2"/>
<dbReference type="PRO" id="PR:Q924P2"/>
<dbReference type="Proteomes" id="UP000002494">
    <property type="component" value="Unplaced"/>
</dbReference>
<dbReference type="GO" id="GO:0005743">
    <property type="term" value="C:mitochondrial inner membrane"/>
    <property type="evidence" value="ECO:0000266"/>
    <property type="project" value="RGD"/>
</dbReference>
<dbReference type="GO" id="GO:0031966">
    <property type="term" value="C:mitochondrial membrane"/>
    <property type="evidence" value="ECO:0000318"/>
    <property type="project" value="GO_Central"/>
</dbReference>
<dbReference type="GO" id="GO:0005739">
    <property type="term" value="C:mitochondrion"/>
    <property type="evidence" value="ECO:0000266"/>
    <property type="project" value="RGD"/>
</dbReference>
<dbReference type="GO" id="GO:0030218">
    <property type="term" value="P:erythrocyte differentiation"/>
    <property type="evidence" value="ECO:0000266"/>
    <property type="project" value="RGD"/>
</dbReference>
<dbReference type="GO" id="GO:0006783">
    <property type="term" value="P:heme biosynthetic process"/>
    <property type="evidence" value="ECO:0007669"/>
    <property type="project" value="UniProtKB-KW"/>
</dbReference>
<dbReference type="GO" id="GO:0006839">
    <property type="term" value="P:mitochondrial transport"/>
    <property type="evidence" value="ECO:0000266"/>
    <property type="project" value="RGD"/>
</dbReference>
<dbReference type="GO" id="GO:0070453">
    <property type="term" value="P:regulation of heme biosynthetic process"/>
    <property type="evidence" value="ECO:0000266"/>
    <property type="project" value="RGD"/>
</dbReference>
<dbReference type="FunFam" id="1.10.10.1740:FF:000002">
    <property type="entry name" value="Transmembrane protein 14C"/>
    <property type="match status" value="1"/>
</dbReference>
<dbReference type="Gene3D" id="1.10.10.1740">
    <property type="entry name" value="Transmembrane protein 14-like"/>
    <property type="match status" value="1"/>
</dbReference>
<dbReference type="InterPro" id="IPR005349">
    <property type="entry name" value="TMEM14"/>
</dbReference>
<dbReference type="InterPro" id="IPR044890">
    <property type="entry name" value="TMEM14_sf"/>
</dbReference>
<dbReference type="PANTHER" id="PTHR12668">
    <property type="entry name" value="TRANSMEMBRANE PROTEIN 14, 15"/>
    <property type="match status" value="1"/>
</dbReference>
<dbReference type="PANTHER" id="PTHR12668:SF4">
    <property type="entry name" value="TRANSMEMBRANE PROTEIN 14C-RELATED"/>
    <property type="match status" value="1"/>
</dbReference>
<dbReference type="Pfam" id="PF03647">
    <property type="entry name" value="Tmemb_14"/>
    <property type="match status" value="1"/>
</dbReference>
<comment type="function">
    <text evidence="1">Required for normal heme biosynthesis.</text>
</comment>
<comment type="subcellular location">
    <subcellularLocation>
        <location evidence="1">Mitochondrion membrane</location>
        <topology evidence="1">Multi-pass membrane protein</topology>
    </subcellularLocation>
</comment>
<comment type="similarity">
    <text evidence="3">Belongs to the TMEM14 family.</text>
</comment>
<accession>Q924P2</accession>
<keyword id="KW-0350">Heme biosynthesis</keyword>
<keyword id="KW-0472">Membrane</keyword>
<keyword id="KW-0496">Mitochondrion</keyword>
<keyword id="KW-1185">Reference proteome</keyword>
<keyword id="KW-0812">Transmembrane</keyword>
<keyword id="KW-1133">Transmembrane helix</keyword>
<organism>
    <name type="scientific">Rattus norvegicus</name>
    <name type="common">Rat</name>
    <dbReference type="NCBI Taxonomy" id="10116"/>
    <lineage>
        <taxon>Eukaryota</taxon>
        <taxon>Metazoa</taxon>
        <taxon>Chordata</taxon>
        <taxon>Craniata</taxon>
        <taxon>Vertebrata</taxon>
        <taxon>Euteleostomi</taxon>
        <taxon>Mammalia</taxon>
        <taxon>Eutheria</taxon>
        <taxon>Euarchontoglires</taxon>
        <taxon>Glires</taxon>
        <taxon>Rodentia</taxon>
        <taxon>Myomorpha</taxon>
        <taxon>Muroidea</taxon>
        <taxon>Muridae</taxon>
        <taxon>Murinae</taxon>
        <taxon>Rattus</taxon>
    </lineage>
</organism>
<sequence length="115" mass="11776">MQKDSGPLVPLHYYGFGYAALVATGGIIGYAKAGSVPSLAAGLFFGGLAGLGAYQLSQDPRNVWVFLATSGTLAGIMGMRFYNSGKFMPAGLIAGASLLMVAPGVAKIQEITTMP</sequence>